<organism>
    <name type="scientific">Burkholderia pseudomallei (strain 1710b)</name>
    <dbReference type="NCBI Taxonomy" id="320372"/>
    <lineage>
        <taxon>Bacteria</taxon>
        <taxon>Pseudomonadati</taxon>
        <taxon>Pseudomonadota</taxon>
        <taxon>Betaproteobacteria</taxon>
        <taxon>Burkholderiales</taxon>
        <taxon>Burkholderiaceae</taxon>
        <taxon>Burkholderia</taxon>
        <taxon>pseudomallei group</taxon>
    </lineage>
</organism>
<reference key="1">
    <citation type="journal article" date="2010" name="Genome Biol. Evol.">
        <title>Continuing evolution of Burkholderia mallei through genome reduction and large-scale rearrangements.</title>
        <authorList>
            <person name="Losada L."/>
            <person name="Ronning C.M."/>
            <person name="DeShazer D."/>
            <person name="Woods D."/>
            <person name="Fedorova N."/>
            <person name="Kim H.S."/>
            <person name="Shabalina S.A."/>
            <person name="Pearson T.R."/>
            <person name="Brinkac L."/>
            <person name="Tan P."/>
            <person name="Nandi T."/>
            <person name="Crabtree J."/>
            <person name="Badger J."/>
            <person name="Beckstrom-Sternberg S."/>
            <person name="Saqib M."/>
            <person name="Schutzer S.E."/>
            <person name="Keim P."/>
            <person name="Nierman W.C."/>
        </authorList>
    </citation>
    <scope>NUCLEOTIDE SEQUENCE [LARGE SCALE GENOMIC DNA]</scope>
    <source>
        <strain>1710b</strain>
    </source>
</reference>
<keyword id="KW-0010">Activator</keyword>
<keyword id="KW-1005">Bacterial flagellum biogenesis</keyword>
<keyword id="KW-0963">Cytoplasm</keyword>
<keyword id="KW-1015">Disulfide bond</keyword>
<keyword id="KW-0238">DNA-binding</keyword>
<keyword id="KW-0804">Transcription</keyword>
<keyword id="KW-0805">Transcription regulation</keyword>
<protein>
    <recommendedName>
        <fullName evidence="1">Flagellar transcriptional regulator FlhD</fullName>
    </recommendedName>
</protein>
<gene>
    <name evidence="1" type="primary">flhD</name>
    <name type="ordered locus">BURPS1710b_0082</name>
</gene>
<evidence type="ECO:0000255" key="1">
    <source>
        <dbReference type="HAMAP-Rule" id="MF_00725"/>
    </source>
</evidence>
<evidence type="ECO:0000305" key="2"/>
<accession>Q3JY54</accession>
<proteinExistence type="inferred from homology"/>
<dbReference type="EMBL" id="CP000124">
    <property type="protein sequence ID" value="ABA48191.1"/>
    <property type="status" value="ALT_INIT"/>
    <property type="molecule type" value="Genomic_DNA"/>
</dbReference>
<dbReference type="RefSeq" id="WP_004525701.1">
    <property type="nucleotide sequence ID" value="NC_007434.1"/>
</dbReference>
<dbReference type="SMR" id="Q3JY54"/>
<dbReference type="EnsemblBacteria" id="ABA48191">
    <property type="protein sequence ID" value="ABA48191"/>
    <property type="gene ID" value="BURPS1710b_0082"/>
</dbReference>
<dbReference type="KEGG" id="bpm:BURPS1710b_0082"/>
<dbReference type="HOGENOM" id="CLU_1243395_0_0_4"/>
<dbReference type="Proteomes" id="UP000002700">
    <property type="component" value="Chromosome I"/>
</dbReference>
<dbReference type="GO" id="GO:0005737">
    <property type="term" value="C:cytoplasm"/>
    <property type="evidence" value="ECO:0007669"/>
    <property type="project" value="UniProtKB-SubCell"/>
</dbReference>
<dbReference type="GO" id="GO:0003677">
    <property type="term" value="F:DNA binding"/>
    <property type="evidence" value="ECO:0007669"/>
    <property type="project" value="UniProtKB-UniRule"/>
</dbReference>
<dbReference type="GO" id="GO:0044780">
    <property type="term" value="P:bacterial-type flagellum assembly"/>
    <property type="evidence" value="ECO:0007669"/>
    <property type="project" value="InterPro"/>
</dbReference>
<dbReference type="GO" id="GO:0045893">
    <property type="term" value="P:positive regulation of DNA-templated transcription"/>
    <property type="evidence" value="ECO:0007669"/>
    <property type="project" value="InterPro"/>
</dbReference>
<dbReference type="GO" id="GO:1902208">
    <property type="term" value="P:regulation of bacterial-type flagellum assembly"/>
    <property type="evidence" value="ECO:0007669"/>
    <property type="project" value="UniProtKB-UniRule"/>
</dbReference>
<dbReference type="Gene3D" id="1.10.4000.10">
    <property type="entry name" value="Flagellar transcriptional activator FlhD"/>
    <property type="match status" value="1"/>
</dbReference>
<dbReference type="HAMAP" id="MF_00725">
    <property type="entry name" value="FlhD"/>
    <property type="match status" value="1"/>
</dbReference>
<dbReference type="InterPro" id="IPR023559">
    <property type="entry name" value="Flagellar_FlhD"/>
</dbReference>
<dbReference type="InterPro" id="IPR036194">
    <property type="entry name" value="FlhD_sf"/>
</dbReference>
<dbReference type="NCBIfam" id="NF002783">
    <property type="entry name" value="PRK02909.1-1"/>
    <property type="match status" value="1"/>
</dbReference>
<dbReference type="Pfam" id="PF05247">
    <property type="entry name" value="FlhD"/>
    <property type="match status" value="1"/>
</dbReference>
<dbReference type="SUPFAM" id="SSF63592">
    <property type="entry name" value="Flagellar transcriptional activator FlhD"/>
    <property type="match status" value="1"/>
</dbReference>
<comment type="function">
    <text evidence="1">Functions in complex with FlhC as a master transcriptional regulator that regulates transcription of several flagellar and non-flagellar operons by binding to their promoter region. Activates expression of class 2 flagellar genes, including fliA, which is a flagellum-specific sigma factor that turns on the class 3 genes. Also regulates genes whose products function in a variety of physiological pathways.</text>
</comment>
<comment type="subunit">
    <text evidence="1">Homodimer; disulfide-linked. Forms a heterohexamer composed of two FlhC and four FlhD subunits. Each FlhC binds a FlhD dimer, forming a heterotrimer, and a hexamer assembles by dimerization of two heterotrimers.</text>
</comment>
<comment type="subcellular location">
    <subcellularLocation>
        <location evidence="1">Cytoplasm</location>
    </subcellularLocation>
</comment>
<comment type="domain">
    <text evidence="1">The C-terminal region contains a putative helix-turn-helix (HTH) motif, suggesting that this region may bind DNA.</text>
</comment>
<comment type="similarity">
    <text evidence="1">Belongs to the FlhD family.</text>
</comment>
<comment type="sequence caution" evidence="2">
    <conflict type="erroneous initiation">
        <sequence resource="EMBL-CDS" id="ABA48191"/>
    </conflict>
    <text>Extended N-terminus.</text>
</comment>
<sequence length="106" mass="11593">MSATSEMLAEINEVNLSYLLLAQRLLREDKAMGMFRMGISEELADVLANLTLAQTVKLAASNQMLCRFRFDDHALLSSLADKGRSSAVSHAHSAILMAGQPVESLR</sequence>
<name>FLHD_BURP1</name>
<feature type="chain" id="PRO_0000406772" description="Flagellar transcriptional regulator FlhD">
    <location>
        <begin position="1"/>
        <end position="106"/>
    </location>
</feature>
<feature type="disulfide bond" description="Interchain" evidence="1">
    <location>
        <position position="66"/>
    </location>
</feature>